<accession>B5ZWB3</accession>
<evidence type="ECO:0000255" key="1">
    <source>
        <dbReference type="HAMAP-Rule" id="MF_00041"/>
    </source>
</evidence>
<reference key="1">
    <citation type="journal article" date="2010" name="Stand. Genomic Sci.">
        <title>Complete genome sequence of Rhizobium leguminosarum bv trifolii strain WSM2304, an effective microsymbiont of the South American clover Trifolium polymorphum.</title>
        <authorList>
            <person name="Reeve W."/>
            <person name="O'Hara G."/>
            <person name="Chain P."/>
            <person name="Ardley J."/>
            <person name="Brau L."/>
            <person name="Nandesena K."/>
            <person name="Tiwari R."/>
            <person name="Malfatti S."/>
            <person name="Kiss H."/>
            <person name="Lapidus A."/>
            <person name="Copeland A."/>
            <person name="Nolan M."/>
            <person name="Land M."/>
            <person name="Ivanova N."/>
            <person name="Mavromatis K."/>
            <person name="Markowitz V."/>
            <person name="Kyrpides N."/>
            <person name="Melino V."/>
            <person name="Denton M."/>
            <person name="Yates R."/>
            <person name="Howieson J."/>
        </authorList>
    </citation>
    <scope>NUCLEOTIDE SEQUENCE [LARGE SCALE GENOMIC DNA]</scope>
    <source>
        <strain>WSM2304</strain>
    </source>
</reference>
<gene>
    <name evidence="1" type="primary">cysS</name>
    <name type="ordered locus">Rleg2_1038</name>
</gene>
<comment type="catalytic activity">
    <reaction evidence="1">
        <text>tRNA(Cys) + L-cysteine + ATP = L-cysteinyl-tRNA(Cys) + AMP + diphosphate</text>
        <dbReference type="Rhea" id="RHEA:17773"/>
        <dbReference type="Rhea" id="RHEA-COMP:9661"/>
        <dbReference type="Rhea" id="RHEA-COMP:9679"/>
        <dbReference type="ChEBI" id="CHEBI:30616"/>
        <dbReference type="ChEBI" id="CHEBI:33019"/>
        <dbReference type="ChEBI" id="CHEBI:35235"/>
        <dbReference type="ChEBI" id="CHEBI:78442"/>
        <dbReference type="ChEBI" id="CHEBI:78517"/>
        <dbReference type="ChEBI" id="CHEBI:456215"/>
        <dbReference type="EC" id="6.1.1.16"/>
    </reaction>
</comment>
<comment type="cofactor">
    <cofactor evidence="1">
        <name>Zn(2+)</name>
        <dbReference type="ChEBI" id="CHEBI:29105"/>
    </cofactor>
    <text evidence="1">Binds 1 zinc ion per subunit.</text>
</comment>
<comment type="subunit">
    <text evidence="1">Monomer.</text>
</comment>
<comment type="subcellular location">
    <subcellularLocation>
        <location evidence="1">Cytoplasm</location>
    </subcellularLocation>
</comment>
<comment type="similarity">
    <text evidence="1">Belongs to the class-I aminoacyl-tRNA synthetase family.</text>
</comment>
<feature type="chain" id="PRO_1000090862" description="Cysteine--tRNA ligase">
    <location>
        <begin position="1"/>
        <end position="463"/>
    </location>
</feature>
<feature type="short sequence motif" description="'HIGH' region">
    <location>
        <begin position="35"/>
        <end position="45"/>
    </location>
</feature>
<feature type="short sequence motif" description="'KMSKS' region">
    <location>
        <begin position="279"/>
        <end position="283"/>
    </location>
</feature>
<feature type="binding site" evidence="1">
    <location>
        <position position="33"/>
    </location>
    <ligand>
        <name>Zn(2+)</name>
        <dbReference type="ChEBI" id="CHEBI:29105"/>
    </ligand>
</feature>
<feature type="binding site" evidence="1">
    <location>
        <position position="221"/>
    </location>
    <ligand>
        <name>Zn(2+)</name>
        <dbReference type="ChEBI" id="CHEBI:29105"/>
    </ligand>
</feature>
<feature type="binding site" evidence="1">
    <location>
        <position position="246"/>
    </location>
    <ligand>
        <name>Zn(2+)</name>
        <dbReference type="ChEBI" id="CHEBI:29105"/>
    </ligand>
</feature>
<feature type="binding site" evidence="1">
    <location>
        <position position="250"/>
    </location>
    <ligand>
        <name>Zn(2+)</name>
        <dbReference type="ChEBI" id="CHEBI:29105"/>
    </ligand>
</feature>
<feature type="binding site" evidence="1">
    <location>
        <position position="282"/>
    </location>
    <ligand>
        <name>ATP</name>
        <dbReference type="ChEBI" id="CHEBI:30616"/>
    </ligand>
</feature>
<sequence length="463" mass="51269">MGGMPELKLYNTLTREETVFAPIDPDNVRMYVCGPTVYDFAHIGNARPVIVFDVLFRLLRHVYGEDHVTYARNITDVDDKINARALRDHPGLPLNQAIRAVTERTETQFHADVAELGCLEPSVEPRATDNIVEMTEIIEKLIGNGHAYVAAGEVLFDTKSMADYGQLSKRPLDEQQAGARIAVDAHKKNSGDFVLWKLSSHNEPGWESPWGRGRPGWHIECSAMSKRYLGDVFDIHGGGLDLIFPHHENEIAQSRCAHGTEVMANIWMHNGFLQVEGRKMSKSEGNFVTIHDLLHTQIFGGRKWPGEVLRLAMLMTHYREPIDFSIKRLEEAERLLAKWPATEPGDAEPDETVLNALADNLNTVAAVQALHALAQAAHTDPAAGARFAATAALLGLLPKKAEIDEAVAAAVDALVAMRLEMLKAKNFAEADKIRDELTAKGIQLKDGKDAATGERVTTWEVKR</sequence>
<keyword id="KW-0030">Aminoacyl-tRNA synthetase</keyword>
<keyword id="KW-0067">ATP-binding</keyword>
<keyword id="KW-0963">Cytoplasm</keyword>
<keyword id="KW-0436">Ligase</keyword>
<keyword id="KW-0479">Metal-binding</keyword>
<keyword id="KW-0547">Nucleotide-binding</keyword>
<keyword id="KW-0648">Protein biosynthesis</keyword>
<keyword id="KW-1185">Reference proteome</keyword>
<keyword id="KW-0862">Zinc</keyword>
<proteinExistence type="inferred from homology"/>
<name>SYC_RHILW</name>
<dbReference type="EC" id="6.1.1.16" evidence="1"/>
<dbReference type="EMBL" id="CP001191">
    <property type="protein sequence ID" value="ACI54332.1"/>
    <property type="molecule type" value="Genomic_DNA"/>
</dbReference>
<dbReference type="RefSeq" id="WP_012557154.1">
    <property type="nucleotide sequence ID" value="NC_011369.1"/>
</dbReference>
<dbReference type="SMR" id="B5ZWB3"/>
<dbReference type="STRING" id="395492.Rleg2_1038"/>
<dbReference type="KEGG" id="rlt:Rleg2_1038"/>
<dbReference type="eggNOG" id="COG0215">
    <property type="taxonomic scope" value="Bacteria"/>
</dbReference>
<dbReference type="HOGENOM" id="CLU_013528_0_1_5"/>
<dbReference type="Proteomes" id="UP000008330">
    <property type="component" value="Chromosome"/>
</dbReference>
<dbReference type="GO" id="GO:0005829">
    <property type="term" value="C:cytosol"/>
    <property type="evidence" value="ECO:0007669"/>
    <property type="project" value="TreeGrafter"/>
</dbReference>
<dbReference type="GO" id="GO:0005524">
    <property type="term" value="F:ATP binding"/>
    <property type="evidence" value="ECO:0007669"/>
    <property type="project" value="UniProtKB-UniRule"/>
</dbReference>
<dbReference type="GO" id="GO:0004817">
    <property type="term" value="F:cysteine-tRNA ligase activity"/>
    <property type="evidence" value="ECO:0007669"/>
    <property type="project" value="UniProtKB-UniRule"/>
</dbReference>
<dbReference type="GO" id="GO:0008270">
    <property type="term" value="F:zinc ion binding"/>
    <property type="evidence" value="ECO:0007669"/>
    <property type="project" value="UniProtKB-UniRule"/>
</dbReference>
<dbReference type="GO" id="GO:0006423">
    <property type="term" value="P:cysteinyl-tRNA aminoacylation"/>
    <property type="evidence" value="ECO:0007669"/>
    <property type="project" value="UniProtKB-UniRule"/>
</dbReference>
<dbReference type="CDD" id="cd00672">
    <property type="entry name" value="CysRS_core"/>
    <property type="match status" value="1"/>
</dbReference>
<dbReference type="FunFam" id="3.40.50.620:FF:000068">
    <property type="entry name" value="Cysteine--tRNA ligase"/>
    <property type="match status" value="1"/>
</dbReference>
<dbReference type="Gene3D" id="3.40.50.620">
    <property type="entry name" value="HUPs"/>
    <property type="match status" value="1"/>
</dbReference>
<dbReference type="HAMAP" id="MF_00041">
    <property type="entry name" value="Cys_tRNA_synth"/>
    <property type="match status" value="1"/>
</dbReference>
<dbReference type="InterPro" id="IPR015803">
    <property type="entry name" value="Cys-tRNA-ligase"/>
</dbReference>
<dbReference type="InterPro" id="IPR024909">
    <property type="entry name" value="Cys-tRNA/MSH_ligase"/>
</dbReference>
<dbReference type="InterPro" id="IPR056411">
    <property type="entry name" value="CysS_C"/>
</dbReference>
<dbReference type="InterPro" id="IPR014729">
    <property type="entry name" value="Rossmann-like_a/b/a_fold"/>
</dbReference>
<dbReference type="InterPro" id="IPR032678">
    <property type="entry name" value="tRNA-synt_1_cat_dom"/>
</dbReference>
<dbReference type="InterPro" id="IPR009080">
    <property type="entry name" value="tRNAsynth_Ia_anticodon-bd"/>
</dbReference>
<dbReference type="NCBIfam" id="TIGR00435">
    <property type="entry name" value="cysS"/>
    <property type="match status" value="1"/>
</dbReference>
<dbReference type="PANTHER" id="PTHR10890:SF3">
    <property type="entry name" value="CYSTEINE--TRNA LIGASE, CYTOPLASMIC"/>
    <property type="match status" value="1"/>
</dbReference>
<dbReference type="PANTHER" id="PTHR10890">
    <property type="entry name" value="CYSTEINYL-TRNA SYNTHETASE"/>
    <property type="match status" value="1"/>
</dbReference>
<dbReference type="Pfam" id="PF23493">
    <property type="entry name" value="CysS_C"/>
    <property type="match status" value="1"/>
</dbReference>
<dbReference type="Pfam" id="PF01406">
    <property type="entry name" value="tRNA-synt_1e"/>
    <property type="match status" value="1"/>
</dbReference>
<dbReference type="PRINTS" id="PR00983">
    <property type="entry name" value="TRNASYNTHCYS"/>
</dbReference>
<dbReference type="SUPFAM" id="SSF47323">
    <property type="entry name" value="Anticodon-binding domain of a subclass of class I aminoacyl-tRNA synthetases"/>
    <property type="match status" value="1"/>
</dbReference>
<dbReference type="SUPFAM" id="SSF52374">
    <property type="entry name" value="Nucleotidylyl transferase"/>
    <property type="match status" value="1"/>
</dbReference>
<protein>
    <recommendedName>
        <fullName evidence="1">Cysteine--tRNA ligase</fullName>
        <ecNumber evidence="1">6.1.1.16</ecNumber>
    </recommendedName>
    <alternativeName>
        <fullName evidence="1">Cysteinyl-tRNA synthetase</fullName>
        <shortName evidence="1">CysRS</shortName>
    </alternativeName>
</protein>
<organism>
    <name type="scientific">Rhizobium leguminosarum bv. trifolii (strain WSM2304)</name>
    <dbReference type="NCBI Taxonomy" id="395492"/>
    <lineage>
        <taxon>Bacteria</taxon>
        <taxon>Pseudomonadati</taxon>
        <taxon>Pseudomonadota</taxon>
        <taxon>Alphaproteobacteria</taxon>
        <taxon>Hyphomicrobiales</taxon>
        <taxon>Rhizobiaceae</taxon>
        <taxon>Rhizobium/Agrobacterium group</taxon>
        <taxon>Rhizobium</taxon>
    </lineage>
</organism>